<sequence length="381" mass="44248">MGCLGNSSKTAEDQGVDEKERREANKKIEKQLQKERLAYKATHRLLLLGAGESGKSTIVKQMRILHVNGSNPEEKKQKILDIRKNVKDAIVTIVSAMSTIIPPVPLANPENQFRSDYIKSIAPITDFEYSQEFFDHVKKLWDDEGVKACFERSNEYQLIDCAQYFLERIDSVSLVDYTPTDQDLLRCRVLTSGIFETRFQVDKVNFHMFDVGGQRDERRKWIQCFNDVTAIIYVAACSSYNMVIREDNNTNRLRESLDLFESIWNNRWLRTISIILFLNKQDMLAEKVLAGKSKIEDYFPEYANYTVPEDATPDAGEDPKVTRAKFFIRDLFLRISTATGDGKHYCYPHFTCAVDTENIRRVFNDCRDIIQRMHLKQYELL</sequence>
<accession>P38406</accession>
<accession>Q64711</accession>
<comment type="function">
    <text evidence="2 5 6">Guanine nucleotide-binding protein (G protein) involved as transducer in olfactory signal transduction controlled by G protein-coupled receptors (GPCRs) (PubMed:2255909, PubMed:2499043). Contains the guanine nucleotide binding site and alternates between an active, GTP-bound state and an inactive, GDP-bound state (By similarity). Signaling by an activated GPCR promotes GDP release and GTP binding (By similarity). The alpha subunit has a low GTPase activity that converts bound GTP to GDP, thereby terminating the signal (By similarity). Both GDP release and GTP hydrolysis are modulated by numerous regulatory proteins (By similarity). GNAL/G(olf) alpha specifically mediates olfactory signal transduction within the olfactory neuroepithelium and the basal ganglia following GPCRs activation (PubMed:2255909, PubMed:2499043). Acts by promoting the specific activation of adenylyl cyclase ADCY3, resulting in increased levels of the signaling molecule cAMP (PubMed:2255909).</text>
</comment>
<comment type="catalytic activity">
    <reaction evidence="2">
        <text>GTP + H2O = GDP + phosphate + H(+)</text>
        <dbReference type="Rhea" id="RHEA:19669"/>
        <dbReference type="ChEBI" id="CHEBI:15377"/>
        <dbReference type="ChEBI" id="CHEBI:15378"/>
        <dbReference type="ChEBI" id="CHEBI:37565"/>
        <dbReference type="ChEBI" id="CHEBI:43474"/>
        <dbReference type="ChEBI" id="CHEBI:58189"/>
    </reaction>
    <physiologicalReaction direction="left-to-right" evidence="2">
        <dbReference type="Rhea" id="RHEA:19670"/>
    </physiologicalReaction>
</comment>
<comment type="subunit">
    <text evidence="2">G proteins are composed of 3 units; alpha, beta and gamma. The alpha chain contains the guanine nucleotide binding site. Interacts with GAS2L2. Interacts (GDP-bound form) with RIC8B (via C-terminus); promoting GNAL folding and association with the plasma membrane.</text>
</comment>
<comment type="subcellular location">
    <subcellularLocation>
        <location evidence="2">Cell membrane</location>
        <topology evidence="2">Peripheral membrane protein</topology>
    </subcellularLocation>
</comment>
<comment type="similarity">
    <text evidence="8">Belongs to the G-alpha family. G(s) subfamily.</text>
</comment>
<evidence type="ECO:0000250" key="1">
    <source>
        <dbReference type="UniProtKB" id="P04896"/>
    </source>
</evidence>
<evidence type="ECO:0000250" key="2">
    <source>
        <dbReference type="UniProtKB" id="Q8CGK7"/>
    </source>
</evidence>
<evidence type="ECO:0000255" key="3">
    <source>
        <dbReference type="PROSITE-ProRule" id="PRU01230"/>
    </source>
</evidence>
<evidence type="ECO:0000256" key="4">
    <source>
        <dbReference type="SAM" id="MobiDB-lite"/>
    </source>
</evidence>
<evidence type="ECO:0000269" key="5">
    <source>
    </source>
</evidence>
<evidence type="ECO:0000269" key="6">
    <source>
    </source>
</evidence>
<evidence type="ECO:0000303" key="7">
    <source>
    </source>
</evidence>
<evidence type="ECO:0000305" key="8"/>
<evidence type="ECO:0000312" key="9">
    <source>
        <dbReference type="RGD" id="2715"/>
    </source>
</evidence>
<keyword id="KW-1003">Cell membrane</keyword>
<keyword id="KW-0342">GTP-binding</keyword>
<keyword id="KW-0378">Hydrolase</keyword>
<keyword id="KW-0449">Lipoprotein</keyword>
<keyword id="KW-0460">Magnesium</keyword>
<keyword id="KW-0472">Membrane</keyword>
<keyword id="KW-0479">Metal-binding</keyword>
<keyword id="KW-0547">Nucleotide-binding</keyword>
<keyword id="KW-0564">Palmitate</keyword>
<keyword id="KW-0597">Phosphoprotein</keyword>
<keyword id="KW-1185">Reference proteome</keyword>
<keyword id="KW-0807">Transducer</keyword>
<name>GNAL_RAT</name>
<reference key="1">
    <citation type="journal article" date="1989" name="Science">
        <title>Golf: an olfactory neuron specific-G protein involved in odorant signal transduction.</title>
        <authorList>
            <person name="Jones D.T."/>
            <person name="Reed R.R."/>
        </authorList>
    </citation>
    <scope>NUCLEOTIDE SEQUENCE [GENOMIC DNA]</scope>
    <scope>FUNCTION</scope>
</reference>
<reference key="2">
    <citation type="journal article" date="1995" name="Brain Res. Mol. Brain Res.">
        <title>Molecular analysis of the multiple Golf alpha subunit mRNAs in the rat brain.</title>
        <authorList>
            <person name="Herve D."/>
            <person name="Rogard M."/>
            <person name="Levi-Strauss M."/>
        </authorList>
    </citation>
    <scope>NUCLEOTIDE SEQUENCE [MRNA]</scope>
    <source>
        <strain>Sprague-Dawley</strain>
        <tissue>Brain</tissue>
    </source>
</reference>
<reference key="3">
    <citation type="journal article" date="1990" name="Science">
        <title>Identification of a specialized adenylyl cyclase that may mediate odorant detection.</title>
        <authorList>
            <person name="Bakalyar H.A."/>
            <person name="Reed R.R."/>
        </authorList>
    </citation>
    <scope>FUNCTION</scope>
</reference>
<protein>
    <recommendedName>
        <fullName evidence="7">Guanine nucleotide-binding protein G(olf) subunit alpha</fullName>
        <ecNumber evidence="2">3.6.5.-</ecNumber>
    </recommendedName>
    <alternativeName>
        <fullName evidence="7">Adenylate cyclase-stimulating G alpha protein, olfactory type</fullName>
    </alternativeName>
</protein>
<gene>
    <name evidence="9" type="primary">Gnal</name>
</gene>
<proteinExistence type="evidence at transcript level"/>
<feature type="initiator methionine" description="Removed" evidence="1">
    <location>
        <position position="1"/>
    </location>
</feature>
<feature type="chain" id="PRO_0000203734" description="Guanine nucleotide-binding protein G(olf) subunit alpha">
    <location>
        <begin position="2"/>
        <end position="381"/>
    </location>
</feature>
<feature type="domain" description="G-alpha" evidence="3">
    <location>
        <begin position="41"/>
        <end position="381"/>
    </location>
</feature>
<feature type="region of interest" description="Disordered" evidence="4">
    <location>
        <begin position="1"/>
        <end position="25"/>
    </location>
</feature>
<feature type="region of interest" description="G1 motif" evidence="3">
    <location>
        <begin position="44"/>
        <end position="57"/>
    </location>
</feature>
<feature type="region of interest" description="G2 motif" evidence="3">
    <location>
        <begin position="183"/>
        <end position="191"/>
    </location>
</feature>
<feature type="region of interest" description="G3 motif" evidence="3">
    <location>
        <begin position="206"/>
        <end position="215"/>
    </location>
</feature>
<feature type="region of interest" description="G4 motif" evidence="3">
    <location>
        <begin position="275"/>
        <end position="282"/>
    </location>
</feature>
<feature type="region of interest" description="G5 motif" evidence="3">
    <location>
        <begin position="351"/>
        <end position="356"/>
    </location>
</feature>
<feature type="compositionally biased region" description="Basic and acidic residues" evidence="4">
    <location>
        <begin position="10"/>
        <end position="25"/>
    </location>
</feature>
<feature type="binding site" evidence="2">
    <location>
        <position position="52"/>
    </location>
    <ligand>
        <name>GTP</name>
        <dbReference type="ChEBI" id="CHEBI:37565"/>
    </ligand>
</feature>
<feature type="binding site" evidence="2">
    <location>
        <position position="53"/>
    </location>
    <ligand>
        <name>GTP</name>
        <dbReference type="ChEBI" id="CHEBI:37565"/>
    </ligand>
</feature>
<feature type="binding site" evidence="2">
    <location>
        <position position="54"/>
    </location>
    <ligand>
        <name>GTP</name>
        <dbReference type="ChEBI" id="CHEBI:37565"/>
    </ligand>
</feature>
<feature type="binding site" evidence="2">
    <location>
        <position position="55"/>
    </location>
    <ligand>
        <name>GTP</name>
        <dbReference type="ChEBI" id="CHEBI:37565"/>
    </ligand>
</feature>
<feature type="binding site" evidence="2">
    <location>
        <position position="56"/>
    </location>
    <ligand>
        <name>GTP</name>
        <dbReference type="ChEBI" id="CHEBI:37565"/>
    </ligand>
</feature>
<feature type="binding site" evidence="2">
    <location>
        <position position="56"/>
    </location>
    <ligand>
        <name>Mg(2+)</name>
        <dbReference type="ChEBI" id="CHEBI:18420"/>
    </ligand>
</feature>
<feature type="binding site" evidence="2">
    <location>
        <position position="57"/>
    </location>
    <ligand>
        <name>GTP</name>
        <dbReference type="ChEBI" id="CHEBI:37565"/>
    </ligand>
</feature>
<feature type="binding site" evidence="2">
    <location>
        <position position="185"/>
    </location>
    <ligand>
        <name>GTP</name>
        <dbReference type="ChEBI" id="CHEBI:37565"/>
    </ligand>
</feature>
<feature type="binding site" evidence="2">
    <location>
        <position position="186"/>
    </location>
    <ligand>
        <name>GTP</name>
        <dbReference type="ChEBI" id="CHEBI:37565"/>
    </ligand>
</feature>
<feature type="binding site" evidence="2">
    <location>
        <position position="191"/>
    </location>
    <ligand>
        <name>GTP</name>
        <dbReference type="ChEBI" id="CHEBI:37565"/>
    </ligand>
</feature>
<feature type="binding site" evidence="2">
    <location>
        <position position="191"/>
    </location>
    <ligand>
        <name>Mg(2+)</name>
        <dbReference type="ChEBI" id="CHEBI:18420"/>
    </ligand>
</feature>
<feature type="binding site" evidence="2">
    <location>
        <position position="210"/>
    </location>
    <ligand>
        <name>Mg(2+)</name>
        <dbReference type="ChEBI" id="CHEBI:18420"/>
    </ligand>
</feature>
<feature type="binding site" evidence="2">
    <location>
        <position position="213"/>
    </location>
    <ligand>
        <name>GTP</name>
        <dbReference type="ChEBI" id="CHEBI:37565"/>
    </ligand>
</feature>
<feature type="binding site" evidence="2">
    <location>
        <position position="279"/>
    </location>
    <ligand>
        <name>GTP</name>
        <dbReference type="ChEBI" id="CHEBI:37565"/>
    </ligand>
</feature>
<feature type="binding site" evidence="2">
    <location>
        <position position="280"/>
    </location>
    <ligand>
        <name>GTP</name>
        <dbReference type="ChEBI" id="CHEBI:37565"/>
    </ligand>
</feature>
<feature type="binding site" evidence="2">
    <location>
        <position position="282"/>
    </location>
    <ligand>
        <name>GTP</name>
        <dbReference type="ChEBI" id="CHEBI:37565"/>
    </ligand>
</feature>
<feature type="binding site" evidence="2">
    <location>
        <position position="353"/>
    </location>
    <ligand>
        <name>GTP</name>
        <dbReference type="ChEBI" id="CHEBI:37565"/>
    </ligand>
</feature>
<feature type="modified residue" description="Phosphothreonine" evidence="2">
    <location>
        <position position="178"/>
    </location>
</feature>
<feature type="lipid moiety-binding region" description="N-palmitoyl glycine" evidence="1">
    <location>
        <position position="2"/>
    </location>
</feature>
<feature type="lipid moiety-binding region" description="S-palmitoyl cysteine" evidence="1">
    <location>
        <position position="3"/>
    </location>
</feature>
<feature type="sequence conflict" description="In Ref. 1; M26718." evidence="8" ref="1">
    <original>S</original>
    <variation>F</variation>
    <location>
        <position position="70"/>
    </location>
</feature>
<feature type="sequence conflict" description="In Ref. 1; M26718." evidence="8" ref="1">
    <original>I</original>
    <variation>L</variation>
    <location>
        <position position="90"/>
    </location>
</feature>
<feature type="sequence conflict" description="In Ref. 1; M26718." evidence="8" ref="1">
    <original>V</original>
    <variation>I</variation>
    <location>
        <position position="94"/>
    </location>
</feature>
<dbReference type="EC" id="3.6.5.-" evidence="2"/>
<dbReference type="EMBL" id="M26718">
    <property type="status" value="NOT_ANNOTATED_CDS"/>
    <property type="molecule type" value="Genomic_DNA"/>
</dbReference>
<dbReference type="EMBL" id="S80376">
    <property type="protein sequence ID" value="AAP32223.1"/>
    <property type="molecule type" value="mRNA"/>
</dbReference>
<dbReference type="EMBL" id="S80330">
    <property type="status" value="NOT_ANNOTATED_CDS"/>
    <property type="molecule type" value="mRNA"/>
</dbReference>
<dbReference type="RefSeq" id="NP_001178765.1">
    <property type="nucleotide sequence ID" value="NM_001191836.2"/>
</dbReference>
<dbReference type="SMR" id="P38406"/>
<dbReference type="FunCoup" id="P38406">
    <property type="interactions" value="3581"/>
</dbReference>
<dbReference type="STRING" id="10116.ENSRNOP00000073266"/>
<dbReference type="GlyGen" id="P38406">
    <property type="glycosylation" value="1 site"/>
</dbReference>
<dbReference type="PhosphoSitePlus" id="P38406"/>
<dbReference type="jPOST" id="P38406"/>
<dbReference type="PaxDb" id="10116-ENSRNOP00000025172"/>
<dbReference type="GeneID" id="24611"/>
<dbReference type="KEGG" id="rno:24611"/>
<dbReference type="UCSC" id="RGD:2715">
    <property type="organism name" value="rat"/>
</dbReference>
<dbReference type="AGR" id="RGD:2715"/>
<dbReference type="CTD" id="2774"/>
<dbReference type="RGD" id="2715">
    <property type="gene designation" value="Gnal"/>
</dbReference>
<dbReference type="eggNOG" id="KOG0099">
    <property type="taxonomic scope" value="Eukaryota"/>
</dbReference>
<dbReference type="InParanoid" id="P38406"/>
<dbReference type="OrthoDB" id="1343at9989"/>
<dbReference type="PhylomeDB" id="P38406"/>
<dbReference type="Reactome" id="R-RNO-170660">
    <property type="pathway name" value="Adenylate cyclase activating pathway"/>
</dbReference>
<dbReference type="Reactome" id="R-RNO-170670">
    <property type="pathway name" value="Adenylate cyclase inhibitory pathway"/>
</dbReference>
<dbReference type="PRO" id="PR:P38406"/>
<dbReference type="Proteomes" id="UP000002494">
    <property type="component" value="Unplaced"/>
</dbReference>
<dbReference type="GO" id="GO:0001669">
    <property type="term" value="C:acrosomal vesicle"/>
    <property type="evidence" value="ECO:0000314"/>
    <property type="project" value="RGD"/>
</dbReference>
<dbReference type="GO" id="GO:0090651">
    <property type="term" value="C:apical cytoplasm"/>
    <property type="evidence" value="ECO:0000314"/>
    <property type="project" value="RGD"/>
</dbReference>
<dbReference type="GO" id="GO:0097538">
    <property type="term" value="C:ciliary necklace"/>
    <property type="evidence" value="ECO:0000314"/>
    <property type="project" value="RGD"/>
</dbReference>
<dbReference type="GO" id="GO:0005929">
    <property type="term" value="C:cilium"/>
    <property type="evidence" value="ECO:0000314"/>
    <property type="project" value="RGD"/>
</dbReference>
<dbReference type="GO" id="GO:0005737">
    <property type="term" value="C:cytoplasm"/>
    <property type="evidence" value="ECO:0000318"/>
    <property type="project" value="GO_Central"/>
</dbReference>
<dbReference type="GO" id="GO:0005834">
    <property type="term" value="C:heterotrimeric G-protein complex"/>
    <property type="evidence" value="ECO:0000318"/>
    <property type="project" value="GO_Central"/>
</dbReference>
<dbReference type="GO" id="GO:0005886">
    <property type="term" value="C:plasma membrane"/>
    <property type="evidence" value="ECO:0000304"/>
    <property type="project" value="Reactome"/>
</dbReference>
<dbReference type="GO" id="GO:0097225">
    <property type="term" value="C:sperm midpiece"/>
    <property type="evidence" value="ECO:0000314"/>
    <property type="project" value="RGD"/>
</dbReference>
<dbReference type="GO" id="GO:0003925">
    <property type="term" value="F:G protein activity"/>
    <property type="evidence" value="ECO:0000266"/>
    <property type="project" value="RGD"/>
</dbReference>
<dbReference type="GO" id="GO:0001664">
    <property type="term" value="F:G protein-coupled receptor binding"/>
    <property type="evidence" value="ECO:0000318"/>
    <property type="project" value="GO_Central"/>
</dbReference>
<dbReference type="GO" id="GO:0031683">
    <property type="term" value="F:G-protein beta/gamma-subunit complex binding"/>
    <property type="evidence" value="ECO:0000318"/>
    <property type="project" value="GO_Central"/>
</dbReference>
<dbReference type="GO" id="GO:0005525">
    <property type="term" value="F:GTP binding"/>
    <property type="evidence" value="ECO:0007669"/>
    <property type="project" value="UniProtKB-KW"/>
</dbReference>
<dbReference type="GO" id="GO:0003924">
    <property type="term" value="F:GTPase activity"/>
    <property type="evidence" value="ECO:0000318"/>
    <property type="project" value="GO_Central"/>
</dbReference>
<dbReference type="GO" id="GO:0046872">
    <property type="term" value="F:metal ion binding"/>
    <property type="evidence" value="ECO:0007669"/>
    <property type="project" value="UniProtKB-KW"/>
</dbReference>
<dbReference type="GO" id="GO:0007191">
    <property type="term" value="P:adenylate cyclase-activating dopamine receptor signaling pathway"/>
    <property type="evidence" value="ECO:0000266"/>
    <property type="project" value="RGD"/>
</dbReference>
<dbReference type="GO" id="GO:0007189">
    <property type="term" value="P:adenylate cyclase-activating G protein-coupled receptor signaling pathway"/>
    <property type="evidence" value="ECO:0000266"/>
    <property type="project" value="RGD"/>
</dbReference>
<dbReference type="GO" id="GO:1903351">
    <property type="term" value="P:cellular response to dopamine"/>
    <property type="evidence" value="ECO:0000315"/>
    <property type="project" value="RGD"/>
</dbReference>
<dbReference type="GO" id="GO:1900452">
    <property type="term" value="P:regulation of long-term synaptic depression"/>
    <property type="evidence" value="ECO:0000315"/>
    <property type="project" value="RGD"/>
</dbReference>
<dbReference type="GO" id="GO:0001975">
    <property type="term" value="P:response to amphetamine"/>
    <property type="evidence" value="ECO:0000266"/>
    <property type="project" value="RGD"/>
</dbReference>
<dbReference type="GO" id="GO:0031000">
    <property type="term" value="P:response to caffeine"/>
    <property type="evidence" value="ECO:0000266"/>
    <property type="project" value="RGD"/>
</dbReference>
<dbReference type="GO" id="GO:0007606">
    <property type="term" value="P:sensory perception of chemical stimulus"/>
    <property type="evidence" value="ECO:0000318"/>
    <property type="project" value="GO_Central"/>
</dbReference>
<dbReference type="GO" id="GO:0007608">
    <property type="term" value="P:sensory perception of smell"/>
    <property type="evidence" value="ECO:0000266"/>
    <property type="project" value="RGD"/>
</dbReference>
<dbReference type="CDD" id="cd00066">
    <property type="entry name" value="G-alpha"/>
    <property type="match status" value="1"/>
</dbReference>
<dbReference type="FunFam" id="1.10.400.10:FF:000003">
    <property type="entry name" value="Guanine nucleotide-binding protein G(S) subunit alpha"/>
    <property type="match status" value="1"/>
</dbReference>
<dbReference type="FunFam" id="3.40.50.300:FF:006178">
    <property type="entry name" value="Guanine nucleotide-binding protein G(s) subunit alpha isoforms short"/>
    <property type="match status" value="1"/>
</dbReference>
<dbReference type="Gene3D" id="1.10.400.10">
    <property type="entry name" value="GI Alpha 1, domain 2-like"/>
    <property type="match status" value="1"/>
</dbReference>
<dbReference type="Gene3D" id="3.40.50.300">
    <property type="entry name" value="P-loop containing nucleotide triphosphate hydrolases"/>
    <property type="match status" value="1"/>
</dbReference>
<dbReference type="InterPro" id="IPR000367">
    <property type="entry name" value="Gprotein_alpha_S"/>
</dbReference>
<dbReference type="InterPro" id="IPR001019">
    <property type="entry name" value="Gprotein_alpha_su"/>
</dbReference>
<dbReference type="InterPro" id="IPR011025">
    <property type="entry name" value="GproteinA_insert"/>
</dbReference>
<dbReference type="InterPro" id="IPR027417">
    <property type="entry name" value="P-loop_NTPase"/>
</dbReference>
<dbReference type="PANTHER" id="PTHR10218">
    <property type="entry name" value="GTP-BINDING PROTEIN ALPHA SUBUNIT"/>
    <property type="match status" value="1"/>
</dbReference>
<dbReference type="PANTHER" id="PTHR10218:SF233">
    <property type="entry name" value="GUANINE NUCLEOTIDE-BINDING PROTEIN G(OLF) SUBUNIT ALPHA"/>
    <property type="match status" value="1"/>
</dbReference>
<dbReference type="Pfam" id="PF00503">
    <property type="entry name" value="G-alpha"/>
    <property type="match status" value="1"/>
</dbReference>
<dbReference type="PRINTS" id="PR00318">
    <property type="entry name" value="GPROTEINA"/>
</dbReference>
<dbReference type="PRINTS" id="PR00443">
    <property type="entry name" value="GPROTEINAS"/>
</dbReference>
<dbReference type="SMART" id="SM00275">
    <property type="entry name" value="G_alpha"/>
    <property type="match status" value="1"/>
</dbReference>
<dbReference type="SUPFAM" id="SSF52540">
    <property type="entry name" value="P-loop containing nucleoside triphosphate hydrolases"/>
    <property type="match status" value="1"/>
</dbReference>
<dbReference type="SUPFAM" id="SSF47895">
    <property type="entry name" value="Transducin (alpha subunit), insertion domain"/>
    <property type="match status" value="1"/>
</dbReference>
<dbReference type="PROSITE" id="PS51882">
    <property type="entry name" value="G_ALPHA"/>
    <property type="match status" value="1"/>
</dbReference>
<organism>
    <name type="scientific">Rattus norvegicus</name>
    <name type="common">Rat</name>
    <dbReference type="NCBI Taxonomy" id="10116"/>
    <lineage>
        <taxon>Eukaryota</taxon>
        <taxon>Metazoa</taxon>
        <taxon>Chordata</taxon>
        <taxon>Craniata</taxon>
        <taxon>Vertebrata</taxon>
        <taxon>Euteleostomi</taxon>
        <taxon>Mammalia</taxon>
        <taxon>Eutheria</taxon>
        <taxon>Euarchontoglires</taxon>
        <taxon>Glires</taxon>
        <taxon>Rodentia</taxon>
        <taxon>Myomorpha</taxon>
        <taxon>Muroidea</taxon>
        <taxon>Muridae</taxon>
        <taxon>Murinae</taxon>
        <taxon>Rattus</taxon>
    </lineage>
</organism>